<keyword id="KW-0119">Carbohydrate metabolism</keyword>
<keyword id="KW-0961">Cell wall biogenesis/degradation</keyword>
<keyword id="KW-0136">Cellulose degradation</keyword>
<keyword id="KW-0326">Glycosidase</keyword>
<keyword id="KW-0378">Hydrolase</keyword>
<keyword id="KW-0624">Polysaccharide degradation</keyword>
<keyword id="KW-1185">Reference proteome</keyword>
<keyword id="KW-0964">Secreted</keyword>
<keyword id="KW-0732">Signal</keyword>
<reference key="1">
    <citation type="journal article" date="2005" name="Nature">
        <title>The map-based sequence of the rice genome.</title>
        <authorList>
            <consortium name="International rice genome sequencing project (IRGSP)"/>
        </authorList>
    </citation>
    <scope>NUCLEOTIDE SEQUENCE [LARGE SCALE GENOMIC DNA]</scope>
    <source>
        <strain>cv. Nipponbare</strain>
    </source>
</reference>
<reference key="2">
    <citation type="journal article" date="2008" name="Nucleic Acids Res.">
        <title>The rice annotation project database (RAP-DB): 2008 update.</title>
        <authorList>
            <consortium name="The rice annotation project (RAP)"/>
        </authorList>
    </citation>
    <scope>GENOME REANNOTATION</scope>
    <source>
        <strain>cv. Nipponbare</strain>
    </source>
</reference>
<reference key="3">
    <citation type="journal article" date="2013" name="Rice">
        <title>Improvement of the Oryza sativa Nipponbare reference genome using next generation sequence and optical map data.</title>
        <authorList>
            <person name="Kawahara Y."/>
            <person name="de la Bastide M."/>
            <person name="Hamilton J.P."/>
            <person name="Kanamori H."/>
            <person name="McCombie W.R."/>
            <person name="Ouyang S."/>
            <person name="Schwartz D.C."/>
            <person name="Tanaka T."/>
            <person name="Wu J."/>
            <person name="Zhou S."/>
            <person name="Childs K.L."/>
            <person name="Davidson R.M."/>
            <person name="Lin H."/>
            <person name="Quesada-Ocampo L."/>
            <person name="Vaillancourt B."/>
            <person name="Sakai H."/>
            <person name="Lee S.S."/>
            <person name="Kim J."/>
            <person name="Numa H."/>
            <person name="Itoh T."/>
            <person name="Buell C.R."/>
            <person name="Matsumoto T."/>
        </authorList>
    </citation>
    <scope>GENOME REANNOTATION</scope>
    <source>
        <strain>cv. Nipponbare</strain>
    </source>
</reference>
<reference key="4">
    <citation type="journal article" date="2003" name="Science">
        <title>Collection, mapping, and annotation of over 28,000 cDNA clones from japonica rice.</title>
        <authorList>
            <consortium name="The rice full-length cDNA consortium"/>
        </authorList>
    </citation>
    <scope>NUCLEOTIDE SEQUENCE [LARGE SCALE MRNA]</scope>
    <source>
        <strain>cv. Nipponbare</strain>
    </source>
</reference>
<reference key="5">
    <citation type="journal article" date="2006" name="Plant Mol. Biol.">
        <title>OsGLU1, a putative membrane-bound endo-1,4-beta-D-glucanase from rice, affects plant internode elongation.</title>
        <authorList>
            <person name="Zhou H.-L."/>
            <person name="He S.-J."/>
            <person name="Cao Y.-R."/>
            <person name="Chen T."/>
            <person name="Du B.-X."/>
            <person name="Chu C.-C."/>
            <person name="Zhang J.-S."/>
            <person name="Chen S.-Y."/>
        </authorList>
    </citation>
    <scope>TISSUE SPECIFICITY</scope>
</reference>
<comment type="catalytic activity">
    <reaction>
        <text>Endohydrolysis of (1-&gt;4)-beta-D-glucosidic linkages in cellulose, lichenin and cereal beta-D-glucans.</text>
        <dbReference type="EC" id="3.2.1.4"/>
    </reaction>
</comment>
<comment type="subcellular location">
    <subcellularLocation>
        <location evidence="1">Secreted</location>
    </subcellularLocation>
</comment>
<comment type="tissue specificity">
    <text evidence="5">Ubiquitous.</text>
</comment>
<comment type="similarity">
    <text evidence="4 6">Belongs to the glycosyl hydrolase 9 (cellulase E) family.</text>
</comment>
<comment type="sequence caution" evidence="6">
    <conflict type="erroneous initiation">
        <sequence resource="EMBL-CDS" id="BAF09976"/>
    </conflict>
</comment>
<sequence length="531" mass="58598">MRGRALVLVAALLLQLLLLAAAGGAGAAATERKAHNYEDALRKSLLYFEAQRSGRLPHNQRVAWRDHSGLTDGLEQGVDLVGGYYDAGDHVKFGLPMAFTVTMLSWSMIEYGDDVEAAGELGHALEAIKWGTDYFIKAHTKPNELWAEVGDGDTDHYCWQRPEDMTTSRQAYKVDRERPGSDVAGETAAAMAAASIVFRKSNPHYASLLLHHAQQLFEFADKYRGKYDSSIAEVKSYYASVSGYKDELLWAALWLHRATGKAHYLDYVVDNADCFGGTGWAITEFSWDVKYAGVQILAARLLLRGEHEERHRSTLEQYRAKAEHYVCGCLGRNADGGADANVERSPGGMLYVRQWNNMQYVTNAAFLLAAYADYLGDDADGAVSCAGGETAGAGEVAALARAQVDYVLGTNPRGISYLVGYGAKYPNRVHHRAASIVPYKHSKEFIGCTQGFDHWFGRRSSNPNVLVGAIVGGPDRRDRFRDNRENYMQTEACTYNTAPMVGMFAKLNRMARQEREQEEVAAPARSTAADV</sequence>
<name>GUN7_ORYSJ</name>
<organism>
    <name type="scientific">Oryza sativa subsp. japonica</name>
    <name type="common">Rice</name>
    <dbReference type="NCBI Taxonomy" id="39947"/>
    <lineage>
        <taxon>Eukaryota</taxon>
        <taxon>Viridiplantae</taxon>
        <taxon>Streptophyta</taxon>
        <taxon>Embryophyta</taxon>
        <taxon>Tracheophyta</taxon>
        <taxon>Spermatophyta</taxon>
        <taxon>Magnoliopsida</taxon>
        <taxon>Liliopsida</taxon>
        <taxon>Poales</taxon>
        <taxon>Poaceae</taxon>
        <taxon>BOP clade</taxon>
        <taxon>Oryzoideae</taxon>
        <taxon>Oryzeae</taxon>
        <taxon>Oryzinae</taxon>
        <taxon>Oryza</taxon>
        <taxon>Oryza sativa</taxon>
    </lineage>
</organism>
<gene>
    <name type="primary">GLU10</name>
    <name type="ordered locus">Os02g0738600</name>
    <name type="ordered locus">LOC_Os02g50490</name>
    <name type="ORF">P0684F11.11</name>
</gene>
<proteinExistence type="evidence at transcript level"/>
<dbReference type="EC" id="3.2.1.4"/>
<dbReference type="EMBL" id="AP005112">
    <property type="protein sequence ID" value="BAD16040.1"/>
    <property type="molecule type" value="Genomic_DNA"/>
</dbReference>
<dbReference type="EMBL" id="AP008208">
    <property type="protein sequence ID" value="BAF09976.1"/>
    <property type="status" value="ALT_INIT"/>
    <property type="molecule type" value="Genomic_DNA"/>
</dbReference>
<dbReference type="EMBL" id="AP014958">
    <property type="status" value="NOT_ANNOTATED_CDS"/>
    <property type="molecule type" value="Genomic_DNA"/>
</dbReference>
<dbReference type="EMBL" id="AK099698">
    <property type="status" value="NOT_ANNOTATED_CDS"/>
    <property type="molecule type" value="mRNA"/>
</dbReference>
<dbReference type="RefSeq" id="XP_015622868.1">
    <property type="nucleotide sequence ID" value="XM_015767382.1"/>
</dbReference>
<dbReference type="SMR" id="Q6Z5P2"/>
<dbReference type="FunCoup" id="Q6Z5P2">
    <property type="interactions" value="20"/>
</dbReference>
<dbReference type="STRING" id="39947.Q6Z5P2"/>
<dbReference type="CAZy" id="GH9">
    <property type="family name" value="Glycoside Hydrolase Family 9"/>
</dbReference>
<dbReference type="PaxDb" id="39947-Q6Z5P2"/>
<dbReference type="KEGG" id="dosa:Os02g0738600"/>
<dbReference type="eggNOG" id="ENOG502QRF6">
    <property type="taxonomic scope" value="Eukaryota"/>
</dbReference>
<dbReference type="HOGENOM" id="CLU_008926_1_4_1"/>
<dbReference type="InParanoid" id="Q6Z5P2"/>
<dbReference type="OrthoDB" id="10257085at2759"/>
<dbReference type="Proteomes" id="UP000000763">
    <property type="component" value="Chromosome 2"/>
</dbReference>
<dbReference type="Proteomes" id="UP000059680">
    <property type="component" value="Chromosome 2"/>
</dbReference>
<dbReference type="GO" id="GO:0005576">
    <property type="term" value="C:extracellular region"/>
    <property type="evidence" value="ECO:0007669"/>
    <property type="project" value="UniProtKB-SubCell"/>
</dbReference>
<dbReference type="GO" id="GO:0008810">
    <property type="term" value="F:cellulase activity"/>
    <property type="evidence" value="ECO:0007669"/>
    <property type="project" value="UniProtKB-EC"/>
</dbReference>
<dbReference type="GO" id="GO:0071555">
    <property type="term" value="P:cell wall organization"/>
    <property type="evidence" value="ECO:0007669"/>
    <property type="project" value="UniProtKB-KW"/>
</dbReference>
<dbReference type="GO" id="GO:0030245">
    <property type="term" value="P:cellulose catabolic process"/>
    <property type="evidence" value="ECO:0007669"/>
    <property type="project" value="UniProtKB-KW"/>
</dbReference>
<dbReference type="FunFam" id="1.50.10.10:FF:000020">
    <property type="entry name" value="Endoglucanase"/>
    <property type="match status" value="1"/>
</dbReference>
<dbReference type="Gene3D" id="1.50.10.10">
    <property type="match status" value="1"/>
</dbReference>
<dbReference type="InterPro" id="IPR008928">
    <property type="entry name" value="6-hairpin_glycosidase_sf"/>
</dbReference>
<dbReference type="InterPro" id="IPR012341">
    <property type="entry name" value="6hp_glycosidase-like_sf"/>
</dbReference>
<dbReference type="InterPro" id="IPR001701">
    <property type="entry name" value="Glyco_hydro_9"/>
</dbReference>
<dbReference type="InterPro" id="IPR018221">
    <property type="entry name" value="Glyco_hydro_9_His_AS"/>
</dbReference>
<dbReference type="PANTHER" id="PTHR22298">
    <property type="entry name" value="ENDO-1,4-BETA-GLUCANASE"/>
    <property type="match status" value="1"/>
</dbReference>
<dbReference type="Pfam" id="PF00759">
    <property type="entry name" value="Glyco_hydro_9"/>
    <property type="match status" value="1"/>
</dbReference>
<dbReference type="SUPFAM" id="SSF48208">
    <property type="entry name" value="Six-hairpin glycosidases"/>
    <property type="match status" value="1"/>
</dbReference>
<dbReference type="PROSITE" id="PS60032">
    <property type="entry name" value="GH9_1"/>
    <property type="match status" value="1"/>
</dbReference>
<dbReference type="PROSITE" id="PS00592">
    <property type="entry name" value="GH9_2"/>
    <property type="match status" value="1"/>
</dbReference>
<feature type="signal peptide" evidence="2">
    <location>
        <begin position="1"/>
        <end position="27"/>
    </location>
</feature>
<feature type="chain" id="PRO_0000249284" description="Endoglucanase 7">
    <location>
        <begin position="28"/>
        <end position="531"/>
    </location>
</feature>
<feature type="active site" description="Nucleophile" evidence="4">
    <location>
        <position position="89"/>
    </location>
</feature>
<feature type="active site" evidence="3">
    <location>
        <position position="430"/>
    </location>
</feature>
<feature type="active site" evidence="3">
    <location>
        <position position="482"/>
    </location>
</feature>
<feature type="active site" evidence="3">
    <location>
        <position position="491"/>
    </location>
</feature>
<feature type="sequence conflict" description="In Ref. 4; AK099698." evidence="6" ref="4">
    <original>A</original>
    <variation>V</variation>
    <location>
        <position position="127"/>
    </location>
</feature>
<feature type="sequence conflict" description="In Ref. 4; AK099698." evidence="6" ref="4">
    <original>D</original>
    <variation>G</variation>
    <location>
        <position position="380"/>
    </location>
</feature>
<protein>
    <recommendedName>
        <fullName>Endoglucanase 7</fullName>
        <ecNumber>3.2.1.4</ecNumber>
    </recommendedName>
    <alternativeName>
        <fullName>Endo-1,4-beta glucanase 7</fullName>
    </alternativeName>
    <alternativeName>
        <fullName>OsGLU10</fullName>
    </alternativeName>
</protein>
<evidence type="ECO:0000250" key="1"/>
<evidence type="ECO:0000255" key="2"/>
<evidence type="ECO:0000255" key="3">
    <source>
        <dbReference type="PROSITE-ProRule" id="PRU10059"/>
    </source>
</evidence>
<evidence type="ECO:0000255" key="4">
    <source>
        <dbReference type="PROSITE-ProRule" id="PRU10140"/>
    </source>
</evidence>
<evidence type="ECO:0000269" key="5">
    <source>
    </source>
</evidence>
<evidence type="ECO:0000305" key="6"/>
<accession>Q6Z5P2</accession>
<accession>Q0DXR2</accession>